<evidence type="ECO:0000250" key="1"/>
<evidence type="ECO:0000250" key="2">
    <source>
        <dbReference type="UniProtKB" id="Q8H8T0"/>
    </source>
</evidence>
<evidence type="ECO:0000269" key="3">
    <source>
    </source>
</evidence>
<evidence type="ECO:0000269" key="4">
    <source>
    </source>
</evidence>
<evidence type="ECO:0000269" key="5">
    <source>
    </source>
</evidence>
<evidence type="ECO:0000269" key="6">
    <source ref="4"/>
</evidence>
<evidence type="ECO:0000269" key="7">
    <source ref="5"/>
</evidence>
<evidence type="ECO:0000303" key="8">
    <source>
    </source>
</evidence>
<evidence type="ECO:0000303" key="9">
    <source ref="1"/>
</evidence>
<evidence type="ECO:0000303" key="10">
    <source ref="4"/>
</evidence>
<evidence type="ECO:0000305" key="11"/>
<name>RGP1_MAIZE</name>
<reference key="1">
    <citation type="submission" date="1997-02" db="EMBL/GenBank/DDBJ databases">
        <title>Isolation of a maize 41 kDa Golgi associated protein.</title>
        <authorList>
            <person name="Katz A."/>
            <person name="Van Lent J.W.M."/>
            <person name="Kotlizky G."/>
            <person name="Yahalom A."/>
            <person name="Epel B.L."/>
        </authorList>
    </citation>
    <scope>NUCLEOTIDE SEQUENCE [MRNA]</scope>
    <source>
        <strain>cv. Jubile</strain>
    </source>
</reference>
<reference key="2">
    <citation type="journal article" date="1995" name="FEBS Lett.">
        <title>Beta-glucosylarginine: a new glucose-protein bond in a self-glucosylating protein from sweet corn.</title>
        <authorList>
            <person name="Singh D.G."/>
            <person name="Lomako J."/>
            <person name="Lomako W.M."/>
            <person name="Whelan W.J."/>
            <person name="Meyer H.E."/>
            <person name="Serwe M."/>
            <person name="Metzger J.W."/>
        </authorList>
    </citation>
    <scope>PROTEIN SEQUENCE OF 31-57; 133-193; 199-208; 244-254; 289-307 AND 337-359</scope>
    <scope>GLYCOSYLATION AT ARG-158</scope>
</reference>
<reference key="3">
    <citation type="journal article" date="1996" name="Theor. Appl. Genet.">
        <title>The maize two dimensional gel protein database: towards an integrated genome analysis program.</title>
        <authorList>
            <person name="Touzet P."/>
            <person name="Riccardi F."/>
            <person name="Morin C."/>
            <person name="Damerval C."/>
            <person name="Huet J.-C."/>
            <person name="Pernollet J.-C."/>
            <person name="Zivy M."/>
            <person name="de Vienne D."/>
        </authorList>
        <dbReference type="AGRICOLA" id="IND20551642"/>
    </citation>
    <scope>PROTEIN SEQUENCE OF 61-75</scope>
    <source>
        <tissue>Coleoptile</tissue>
    </source>
</reference>
<reference key="4">
    <citation type="journal article" date="1994" name="Plant Sci.">
        <title>UDP-glucose:protein transglucosylase in developing maize endosperm.</title>
        <authorList>
            <person name="Rothschild A."/>
            <person name="Tandecarz J.S."/>
        </authorList>
    </citation>
    <scope>FUNCTION</scope>
</reference>
<reference key="5">
    <citation type="journal article" date="1996" name="Protoplasma">
        <title>A 41kDa protein isolated from maize mesocotyl cell walls immunolocalizes to plasmodesmata.</title>
        <authorList>
            <person name="Epel B.L."/>
            <person name="Van Lent J.W.M."/>
            <person name="Cohen L."/>
            <person name="Kotlizky G."/>
            <person name="Katz A."/>
            <person name="Yahalom A."/>
        </authorList>
    </citation>
    <scope>SUBCELLULAR LOCATION</scope>
</reference>
<reference key="6">
    <citation type="journal article" date="1996" name="Cell. Mol. Biol.">
        <title>Inhibition of UDP-glucose: protein transglucosylase by a maize endosperm protein factor.</title>
        <authorList>
            <person name="Rothschild A."/>
            <person name="Wald F.A."/>
            <person name="Bocca S.N."/>
            <person name="Tandecarz J.S."/>
        </authorList>
    </citation>
    <scope>FUNCTION</scope>
</reference>
<reference key="7">
    <citation type="journal article" date="1998" name="Cell. Mol. Biol.">
        <title>Identification of a UPTG inhibitor protein from maize endosperm: high homology with sucrose synthase protein.</title>
        <authorList>
            <person name="Wald F.A."/>
            <person name="Rothschild A."/>
            <person name="Moreno S."/>
            <person name="Tandecarz J.S."/>
        </authorList>
    </citation>
    <scope>FUNCTION</scope>
</reference>
<protein>
    <recommendedName>
        <fullName evidence="11">Probable UDP-arabinopyranose mutase 1</fullName>
        <ecNumber evidence="2">5.4.99.30</ecNumber>
    </recommendedName>
    <alternativeName>
        <fullName evidence="8">Amylogenin</fullName>
    </alternativeName>
    <alternativeName>
        <fullName evidence="9">Golgi-associated protein se-wap41</fullName>
    </alternativeName>
    <alternativeName>
        <fullName evidence="11">Reversibly glycosylated polypeptide</fullName>
        <shortName evidence="11">RGP</shortName>
    </alternativeName>
    <alternativeName>
        <fullName evidence="11">UDP-L-arabinose mutase 1</fullName>
    </alternativeName>
    <alternativeName>
        <fullName evidence="10">UDP-glucose:protein transglucosylase</fullName>
        <shortName evidence="10">UPTG</shortName>
    </alternativeName>
</protein>
<keyword id="KW-0965">Cell junction</keyword>
<keyword id="KW-0134">Cell wall</keyword>
<keyword id="KW-0961">Cell wall biogenesis/degradation</keyword>
<keyword id="KW-0135">Cellulose biosynthesis</keyword>
<keyword id="KW-0903">Direct protein sequencing</keyword>
<keyword id="KW-0325">Glycoprotein</keyword>
<keyword id="KW-0333">Golgi apparatus</keyword>
<keyword id="KW-0413">Isomerase</keyword>
<keyword id="KW-1185">Reference proteome</keyword>
<keyword id="KW-0964">Secreted</keyword>
<proteinExistence type="evidence at protein level"/>
<organism>
    <name type="scientific">Zea mays</name>
    <name type="common">Maize</name>
    <dbReference type="NCBI Taxonomy" id="4577"/>
    <lineage>
        <taxon>Eukaryota</taxon>
        <taxon>Viridiplantae</taxon>
        <taxon>Streptophyta</taxon>
        <taxon>Embryophyta</taxon>
        <taxon>Tracheophyta</taxon>
        <taxon>Spermatophyta</taxon>
        <taxon>Magnoliopsida</taxon>
        <taxon>Liliopsida</taxon>
        <taxon>Poales</taxon>
        <taxon>Poaceae</taxon>
        <taxon>PACMAD clade</taxon>
        <taxon>Panicoideae</taxon>
        <taxon>Andropogonodae</taxon>
        <taxon>Andropogoneae</taxon>
        <taxon>Tripsacinae</taxon>
        <taxon>Zea</taxon>
    </lineage>
</organism>
<comment type="function">
    <text evidence="2 4 5 6">Probable UDP-L-arabinose mutase involved in the biosynthesis of cell wall non-cellulosic polysaccharides (By similarity). Was initially shown to possess an autoglycosylating activity which is dependent on the presence of UDP-glucose and manganese (PubMed:8832094, PubMed:9620435, Ref.4).</text>
</comment>
<comment type="catalytic activity">
    <reaction evidence="2">
        <text>UDP-beta-L-arabinofuranose = UDP-beta-L-arabinopyranose</text>
        <dbReference type="Rhea" id="RHEA:28350"/>
        <dbReference type="ChEBI" id="CHEBI:61457"/>
        <dbReference type="ChEBI" id="CHEBI:61463"/>
        <dbReference type="EC" id="5.4.99.30"/>
    </reaction>
</comment>
<comment type="cofactor">
    <cofactor evidence="2">
        <name>Mn(2+)</name>
        <dbReference type="ChEBI" id="CHEBI:29035"/>
    </cofactor>
    <cofactor evidence="2">
        <name>Mg(2+)</name>
        <dbReference type="ChEBI" id="CHEBI:18420"/>
    </cofactor>
</comment>
<comment type="subunit">
    <text evidence="1">Homopentamer or homohexamer.</text>
</comment>
<comment type="subcellular location">
    <subcellularLocation>
        <location evidence="7">Secreted</location>
        <location evidence="7">Cell wall</location>
    </subcellularLocation>
    <subcellularLocation>
        <location evidence="7">Cell junction</location>
        <location evidence="7">Plasmodesma</location>
    </subcellularLocation>
    <subcellularLocation>
        <location evidence="7">Golgi apparatus</location>
    </subcellularLocation>
    <text evidence="7">Cell wall-associated, with highest concentrations on plasmodesmata. Also located in the Golgi apparatus.</text>
</comment>
<comment type="domain">
    <text evidence="2">The conserved DXD motif is involved in enzyme activity.</text>
</comment>
<comment type="PTM">
    <text evidence="2">Reversibly glycosylated by UDP-glucose, UDP-xylose and UDP-galactose.</text>
</comment>
<comment type="similarity">
    <text evidence="11">Belongs to the RGP family.</text>
</comment>
<feature type="chain" id="PRO_0000221193" description="Probable UDP-arabinopyranose mutase 1">
    <location>
        <begin position="1"/>
        <end position="364"/>
    </location>
</feature>
<feature type="short sequence motif" description="DXD motif" evidence="2">
    <location>
        <begin position="110"/>
        <end position="112"/>
    </location>
</feature>
<feature type="site" description="Required for activity" evidence="2">
    <location>
        <position position="158"/>
    </location>
</feature>
<feature type="site" description="Required for activity" evidence="2">
    <location>
        <position position="165"/>
    </location>
</feature>
<feature type="glycosylation site" description="N-linked (Glc...) arginine" evidence="3">
    <location>
        <position position="158"/>
    </location>
</feature>
<feature type="sequence conflict" description="In Ref. 2; AA sequence." evidence="11" ref="2">
    <original>A</original>
    <variation>P</variation>
    <location>
        <position position="40"/>
    </location>
</feature>
<accession>P80607</accession>
<accession>Q9SAQ2</accession>
<dbReference type="EC" id="5.4.99.30" evidence="2"/>
<dbReference type="EMBL" id="U89897">
    <property type="protein sequence ID" value="AAB49896.1"/>
    <property type="molecule type" value="mRNA"/>
</dbReference>
<dbReference type="PIR" id="T04331">
    <property type="entry name" value="T04331"/>
</dbReference>
<dbReference type="SMR" id="P80607"/>
<dbReference type="FunCoup" id="P80607">
    <property type="interactions" value="1475"/>
</dbReference>
<dbReference type="STRING" id="4577.P80607"/>
<dbReference type="CAZy" id="GT75">
    <property type="family name" value="Glycosyltransferase Family 75"/>
</dbReference>
<dbReference type="GlyCosmos" id="P80607">
    <property type="glycosylation" value="1 site, No reported glycans"/>
</dbReference>
<dbReference type="PaxDb" id="4577-GRMZM2G073725_P01"/>
<dbReference type="ProMEX" id="P80607"/>
<dbReference type="KEGG" id="zma:542592"/>
<dbReference type="MaizeGDB" id="131466"/>
<dbReference type="eggNOG" id="ENOG502QSDP">
    <property type="taxonomic scope" value="Eukaryota"/>
</dbReference>
<dbReference type="InParanoid" id="P80607"/>
<dbReference type="OrthoDB" id="1020896at2759"/>
<dbReference type="Proteomes" id="UP000007305">
    <property type="component" value="Unplaced"/>
</dbReference>
<dbReference type="ExpressionAtlas" id="P80607">
    <property type="expression patterns" value="baseline and differential"/>
</dbReference>
<dbReference type="GO" id="GO:0005829">
    <property type="term" value="C:cytosol"/>
    <property type="evidence" value="ECO:0000318"/>
    <property type="project" value="GO_Central"/>
</dbReference>
<dbReference type="GO" id="GO:0005576">
    <property type="term" value="C:extracellular region"/>
    <property type="evidence" value="ECO:0007669"/>
    <property type="project" value="UniProtKB-KW"/>
</dbReference>
<dbReference type="GO" id="GO:0005794">
    <property type="term" value="C:Golgi apparatus"/>
    <property type="evidence" value="ECO:0000318"/>
    <property type="project" value="GO_Central"/>
</dbReference>
<dbReference type="GO" id="GO:0009506">
    <property type="term" value="C:plasmodesma"/>
    <property type="evidence" value="ECO:0007669"/>
    <property type="project" value="UniProtKB-SubCell"/>
</dbReference>
<dbReference type="GO" id="GO:0052691">
    <property type="term" value="F:UDP-arabinopyranose mutase activity"/>
    <property type="evidence" value="ECO:0000318"/>
    <property type="project" value="GO_Central"/>
</dbReference>
<dbReference type="GO" id="GO:0071555">
    <property type="term" value="P:cell wall organization"/>
    <property type="evidence" value="ECO:0007669"/>
    <property type="project" value="UniProtKB-KW"/>
</dbReference>
<dbReference type="GO" id="GO:0030244">
    <property type="term" value="P:cellulose biosynthetic process"/>
    <property type="evidence" value="ECO:0007669"/>
    <property type="project" value="UniProtKB-KW"/>
</dbReference>
<dbReference type="GO" id="GO:0071669">
    <property type="term" value="P:plant-type cell wall organization or biogenesis"/>
    <property type="evidence" value="ECO:0000318"/>
    <property type="project" value="GO_Central"/>
</dbReference>
<dbReference type="GO" id="GO:0033356">
    <property type="term" value="P:UDP-L-arabinose metabolic process"/>
    <property type="evidence" value="ECO:0000318"/>
    <property type="project" value="GO_Central"/>
</dbReference>
<dbReference type="InterPro" id="IPR029044">
    <property type="entry name" value="Nucleotide-diphossugar_trans"/>
</dbReference>
<dbReference type="InterPro" id="IPR004901">
    <property type="entry name" value="RGP"/>
</dbReference>
<dbReference type="InterPro" id="IPR037595">
    <property type="entry name" value="RGP_fam"/>
</dbReference>
<dbReference type="PANTHER" id="PTHR31682:SF46">
    <property type="entry name" value="UDP-ARABINOPYRANOSE MUTASE 1"/>
    <property type="match status" value="1"/>
</dbReference>
<dbReference type="PANTHER" id="PTHR31682">
    <property type="entry name" value="UDP-ARABINOSE MUTASE"/>
    <property type="match status" value="1"/>
</dbReference>
<dbReference type="Pfam" id="PF03214">
    <property type="entry name" value="RGP"/>
    <property type="match status" value="1"/>
</dbReference>
<dbReference type="PIRSF" id="PIRSF016429">
    <property type="entry name" value="UPTG"/>
    <property type="match status" value="1"/>
</dbReference>
<dbReference type="SUPFAM" id="SSF53448">
    <property type="entry name" value="Nucleotide-diphospho-sugar transferases"/>
    <property type="match status" value="1"/>
</dbReference>
<gene>
    <name evidence="10" type="primary">UPTG</name>
</gene>
<sequence>MAGTVTVPGSSTPSTPLLKDELDIVIPTIRNLDFLEMWRAFFQPYHLIIVQDGDPTKTIKVPEGFDYELYNRNDINRILGPKASCISFKDSACRCFGYMVSKKKYIYTIDDDCFVAKDPSGKDINALEQHIKNLLSPSTPFFFNTLYDPYREGADFVRGYPFSLREGAHTAVSHGLWLNIPDYDAPTQLVKPKERNERYVDAVMTIPKGTLFPMCGMNLAFDRDLIGPAMYFGLMGDGQPIGRYDDMWAGWCVKVICDHLSLGVKTGLPYIWHSKASNPFVNLKKEYKGIFWQEDIIPFFQNVTIPKDCDTVQKCYIYLSGQVKEKLGTIDPYFVKLGDAMVTWIEAWDELNPSTPAAANGKAK</sequence>